<feature type="chain" id="PRO_1000015255" description="S-adenosylmethionine:tRNA ribosyltransferase-isomerase">
    <location>
        <begin position="1"/>
        <end position="361"/>
    </location>
</feature>
<comment type="function">
    <text evidence="1">Transfers and isomerizes the ribose moiety from AdoMet to the 7-aminomethyl group of 7-deazaguanine (preQ1-tRNA) to give epoxyqueuosine (oQ-tRNA).</text>
</comment>
<comment type="catalytic activity">
    <reaction evidence="1">
        <text>7-aminomethyl-7-carbaguanosine(34) in tRNA + S-adenosyl-L-methionine = epoxyqueuosine(34) in tRNA + adenine + L-methionine + 2 H(+)</text>
        <dbReference type="Rhea" id="RHEA:32155"/>
        <dbReference type="Rhea" id="RHEA-COMP:10342"/>
        <dbReference type="Rhea" id="RHEA-COMP:18582"/>
        <dbReference type="ChEBI" id="CHEBI:15378"/>
        <dbReference type="ChEBI" id="CHEBI:16708"/>
        <dbReference type="ChEBI" id="CHEBI:57844"/>
        <dbReference type="ChEBI" id="CHEBI:59789"/>
        <dbReference type="ChEBI" id="CHEBI:82833"/>
        <dbReference type="ChEBI" id="CHEBI:194443"/>
        <dbReference type="EC" id="2.4.99.17"/>
    </reaction>
</comment>
<comment type="pathway">
    <text evidence="1">tRNA modification; tRNA-queuosine biosynthesis.</text>
</comment>
<comment type="subunit">
    <text evidence="1">Monomer.</text>
</comment>
<comment type="subcellular location">
    <subcellularLocation>
        <location evidence="1">Cytoplasm</location>
    </subcellularLocation>
</comment>
<comment type="similarity">
    <text evidence="1">Belongs to the QueA family.</text>
</comment>
<evidence type="ECO:0000255" key="1">
    <source>
        <dbReference type="HAMAP-Rule" id="MF_00113"/>
    </source>
</evidence>
<name>QUEA_RHIJ3</name>
<sequence>MRVDLFDFDLPDERIALRPAEPRDSARLLVIDPNAENSLSDHRVGDLTSFLRAGDALVFNDTKVIPAQLEGIRHRDGAGGQQVSATLHMRTSPSRWKAFAKPGKRIKQGDRISFGHSGESCFLGSLDATVEEKGEAGEVTLLFDLSGPALDEAIAAVGHIPLPPYIAAKRPEDERDRADYQTIYAREEGAVAAPTAGLHFTPGLFEALDRAGIERHFVTLHVGAGTFLPVKADDTADHKMHLESGYVSAEIAARLNAVRERGGRIVCVGTTSLRLIESAAEESGEIMPWAGATGIFITPGYRFKAVDMLMTNFHLPRSTLFMLVSAFAGFETMHAAYKHAISTGYRFYSYGDASLLFRKDR</sequence>
<protein>
    <recommendedName>
        <fullName evidence="1">S-adenosylmethionine:tRNA ribosyltransferase-isomerase</fullName>
        <ecNumber evidence="1">2.4.99.17</ecNumber>
    </recommendedName>
    <alternativeName>
        <fullName evidence="1">Queuosine biosynthesis protein QueA</fullName>
    </alternativeName>
</protein>
<keyword id="KW-0963">Cytoplasm</keyword>
<keyword id="KW-0671">Queuosine biosynthesis</keyword>
<keyword id="KW-0949">S-adenosyl-L-methionine</keyword>
<keyword id="KW-0808">Transferase</keyword>
<organism>
    <name type="scientific">Rhizobium johnstonii (strain DSM 114642 / LMG 32736 / 3841)</name>
    <name type="common">Rhizobium leguminosarum bv. viciae</name>
    <dbReference type="NCBI Taxonomy" id="216596"/>
    <lineage>
        <taxon>Bacteria</taxon>
        <taxon>Pseudomonadati</taxon>
        <taxon>Pseudomonadota</taxon>
        <taxon>Alphaproteobacteria</taxon>
        <taxon>Hyphomicrobiales</taxon>
        <taxon>Rhizobiaceae</taxon>
        <taxon>Rhizobium/Agrobacterium group</taxon>
        <taxon>Rhizobium</taxon>
        <taxon>Rhizobium johnstonii</taxon>
    </lineage>
</organism>
<dbReference type="EC" id="2.4.99.17" evidence="1"/>
<dbReference type="EMBL" id="AM236080">
    <property type="protein sequence ID" value="CAK07896.1"/>
    <property type="molecule type" value="Genomic_DNA"/>
</dbReference>
<dbReference type="RefSeq" id="WP_011651973.1">
    <property type="nucleotide sequence ID" value="NC_008380.1"/>
</dbReference>
<dbReference type="SMR" id="Q1MGM3"/>
<dbReference type="EnsemblBacteria" id="CAK07896">
    <property type="protein sequence ID" value="CAK07896"/>
    <property type="gene ID" value="RL2406"/>
</dbReference>
<dbReference type="KEGG" id="rle:RL2406"/>
<dbReference type="eggNOG" id="COG0809">
    <property type="taxonomic scope" value="Bacteria"/>
</dbReference>
<dbReference type="HOGENOM" id="CLU_039110_1_1_5"/>
<dbReference type="UniPathway" id="UPA00392"/>
<dbReference type="Proteomes" id="UP000006575">
    <property type="component" value="Chromosome"/>
</dbReference>
<dbReference type="GO" id="GO:0005737">
    <property type="term" value="C:cytoplasm"/>
    <property type="evidence" value="ECO:0007669"/>
    <property type="project" value="UniProtKB-SubCell"/>
</dbReference>
<dbReference type="GO" id="GO:0051075">
    <property type="term" value="F:S-adenosylmethionine:tRNA ribosyltransferase-isomerase activity"/>
    <property type="evidence" value="ECO:0007669"/>
    <property type="project" value="UniProtKB-EC"/>
</dbReference>
<dbReference type="GO" id="GO:0008616">
    <property type="term" value="P:queuosine biosynthetic process"/>
    <property type="evidence" value="ECO:0007669"/>
    <property type="project" value="UniProtKB-UniRule"/>
</dbReference>
<dbReference type="GO" id="GO:0002099">
    <property type="term" value="P:tRNA wobble guanine modification"/>
    <property type="evidence" value="ECO:0007669"/>
    <property type="project" value="TreeGrafter"/>
</dbReference>
<dbReference type="FunFam" id="3.40.1780.10:FF:000001">
    <property type="entry name" value="S-adenosylmethionine:tRNA ribosyltransferase-isomerase"/>
    <property type="match status" value="1"/>
</dbReference>
<dbReference type="Gene3D" id="2.40.10.240">
    <property type="entry name" value="QueA-like"/>
    <property type="match status" value="1"/>
</dbReference>
<dbReference type="Gene3D" id="3.40.1780.10">
    <property type="entry name" value="QueA-like"/>
    <property type="match status" value="1"/>
</dbReference>
<dbReference type="HAMAP" id="MF_00113">
    <property type="entry name" value="QueA"/>
    <property type="match status" value="1"/>
</dbReference>
<dbReference type="InterPro" id="IPR003699">
    <property type="entry name" value="QueA"/>
</dbReference>
<dbReference type="InterPro" id="IPR042118">
    <property type="entry name" value="QueA_dom1"/>
</dbReference>
<dbReference type="InterPro" id="IPR042119">
    <property type="entry name" value="QueA_dom2"/>
</dbReference>
<dbReference type="InterPro" id="IPR036100">
    <property type="entry name" value="QueA_sf"/>
</dbReference>
<dbReference type="NCBIfam" id="NF001140">
    <property type="entry name" value="PRK00147.1"/>
    <property type="match status" value="1"/>
</dbReference>
<dbReference type="NCBIfam" id="TIGR00113">
    <property type="entry name" value="queA"/>
    <property type="match status" value="1"/>
</dbReference>
<dbReference type="PANTHER" id="PTHR30307">
    <property type="entry name" value="S-ADENOSYLMETHIONINE:TRNA RIBOSYLTRANSFERASE-ISOMERASE"/>
    <property type="match status" value="1"/>
</dbReference>
<dbReference type="PANTHER" id="PTHR30307:SF0">
    <property type="entry name" value="S-ADENOSYLMETHIONINE:TRNA RIBOSYLTRANSFERASE-ISOMERASE"/>
    <property type="match status" value="1"/>
</dbReference>
<dbReference type="Pfam" id="PF02547">
    <property type="entry name" value="Queuosine_synth"/>
    <property type="match status" value="1"/>
</dbReference>
<dbReference type="SUPFAM" id="SSF111337">
    <property type="entry name" value="QueA-like"/>
    <property type="match status" value="1"/>
</dbReference>
<proteinExistence type="inferred from homology"/>
<reference key="1">
    <citation type="journal article" date="2006" name="Genome Biol.">
        <title>The genome of Rhizobium leguminosarum has recognizable core and accessory components.</title>
        <authorList>
            <person name="Young J.P.W."/>
            <person name="Crossman L.C."/>
            <person name="Johnston A.W.B."/>
            <person name="Thomson N.R."/>
            <person name="Ghazoui Z.F."/>
            <person name="Hull K.H."/>
            <person name="Wexler M."/>
            <person name="Curson A.R.J."/>
            <person name="Todd J.D."/>
            <person name="Poole P.S."/>
            <person name="Mauchline T.H."/>
            <person name="East A.K."/>
            <person name="Quail M.A."/>
            <person name="Churcher C."/>
            <person name="Arrowsmith C."/>
            <person name="Cherevach I."/>
            <person name="Chillingworth T."/>
            <person name="Clarke K."/>
            <person name="Cronin A."/>
            <person name="Davis P."/>
            <person name="Fraser A."/>
            <person name="Hance Z."/>
            <person name="Hauser H."/>
            <person name="Jagels K."/>
            <person name="Moule S."/>
            <person name="Mungall K."/>
            <person name="Norbertczak H."/>
            <person name="Rabbinowitsch E."/>
            <person name="Sanders M."/>
            <person name="Simmonds M."/>
            <person name="Whitehead S."/>
            <person name="Parkhill J."/>
        </authorList>
    </citation>
    <scope>NUCLEOTIDE SEQUENCE [LARGE SCALE GENOMIC DNA]</scope>
    <source>
        <strain>DSM 114642 / LMG 32736 / 3841</strain>
    </source>
</reference>
<gene>
    <name evidence="1" type="primary">queA</name>
    <name type="ordered locus">RL2406</name>
</gene>
<accession>Q1MGM3</accession>